<gene>
    <name type="primary">sarA</name>
    <name type="ordered locus">SAUSA300_0605</name>
</gene>
<dbReference type="EMBL" id="CP000255">
    <property type="protein sequence ID" value="ABD22859.1"/>
    <property type="molecule type" value="Genomic_DNA"/>
</dbReference>
<dbReference type="RefSeq" id="WP_001018677.1">
    <property type="nucleotide sequence ID" value="NZ_CP027476.1"/>
</dbReference>
<dbReference type="SMR" id="Q2FJ20"/>
<dbReference type="KEGG" id="saa:SAUSA300_0605"/>
<dbReference type="HOGENOM" id="CLU_164084_0_0_9"/>
<dbReference type="OMA" id="AMITYAD"/>
<dbReference type="PRO" id="PR:Q2FJ20"/>
<dbReference type="Proteomes" id="UP000001939">
    <property type="component" value="Chromosome"/>
</dbReference>
<dbReference type="GO" id="GO:0005737">
    <property type="term" value="C:cytoplasm"/>
    <property type="evidence" value="ECO:0007669"/>
    <property type="project" value="UniProtKB-SubCell"/>
</dbReference>
<dbReference type="GO" id="GO:0003677">
    <property type="term" value="F:DNA binding"/>
    <property type="evidence" value="ECO:0007669"/>
    <property type="project" value="UniProtKB-KW"/>
</dbReference>
<dbReference type="GO" id="GO:0003700">
    <property type="term" value="F:DNA-binding transcription factor activity"/>
    <property type="evidence" value="ECO:0007669"/>
    <property type="project" value="InterPro"/>
</dbReference>
<dbReference type="GO" id="GO:0046872">
    <property type="term" value="F:metal ion binding"/>
    <property type="evidence" value="ECO:0007669"/>
    <property type="project" value="UniProtKB-KW"/>
</dbReference>
<dbReference type="GO" id="GO:0045862">
    <property type="term" value="P:positive regulation of proteolysis"/>
    <property type="evidence" value="ECO:0000315"/>
    <property type="project" value="CACAO"/>
</dbReference>
<dbReference type="GO" id="GO:0006950">
    <property type="term" value="P:response to stress"/>
    <property type="evidence" value="ECO:0007669"/>
    <property type="project" value="TreeGrafter"/>
</dbReference>
<dbReference type="GO" id="GO:0090609">
    <property type="term" value="P:single-species submerged biofilm formation"/>
    <property type="evidence" value="ECO:0000315"/>
    <property type="project" value="CACAO"/>
</dbReference>
<dbReference type="FunFam" id="1.10.10.10:FF:000541">
    <property type="entry name" value="Transcriptional regulator SarA"/>
    <property type="match status" value="1"/>
</dbReference>
<dbReference type="Gene3D" id="1.10.10.10">
    <property type="entry name" value="Winged helix-like DNA-binding domain superfamily/Winged helix DNA-binding domain"/>
    <property type="match status" value="1"/>
</dbReference>
<dbReference type="InterPro" id="IPR039422">
    <property type="entry name" value="MarR/SlyA-like"/>
</dbReference>
<dbReference type="InterPro" id="IPR010166">
    <property type="entry name" value="SarA/Rot_dom"/>
</dbReference>
<dbReference type="InterPro" id="IPR055166">
    <property type="entry name" value="Transc_reg_Sar_Rot_HTH"/>
</dbReference>
<dbReference type="InterPro" id="IPR036388">
    <property type="entry name" value="WH-like_DNA-bd_sf"/>
</dbReference>
<dbReference type="InterPro" id="IPR036390">
    <property type="entry name" value="WH_DNA-bd_sf"/>
</dbReference>
<dbReference type="NCBIfam" id="TIGR01889">
    <property type="entry name" value="Staph_reg_Sar"/>
    <property type="match status" value="1"/>
</dbReference>
<dbReference type="NCBIfam" id="NF038268">
    <property type="entry name" value="TF_SarA"/>
    <property type="match status" value="1"/>
</dbReference>
<dbReference type="PANTHER" id="PTHR33164:SF5">
    <property type="entry name" value="ORGANIC HYDROPEROXIDE RESISTANCE TRANSCRIPTIONAL REGULATOR"/>
    <property type="match status" value="1"/>
</dbReference>
<dbReference type="PANTHER" id="PTHR33164">
    <property type="entry name" value="TRANSCRIPTIONAL REGULATOR, MARR FAMILY"/>
    <property type="match status" value="1"/>
</dbReference>
<dbReference type="Pfam" id="PF22381">
    <property type="entry name" value="Staph_reg_Sar_Rot"/>
    <property type="match status" value="1"/>
</dbReference>
<dbReference type="SUPFAM" id="SSF46785">
    <property type="entry name" value="Winged helix' DNA-binding domain"/>
    <property type="match status" value="1"/>
</dbReference>
<protein>
    <recommendedName>
        <fullName>Transcriptional regulator SarA</fullName>
    </recommendedName>
    <alternativeName>
        <fullName>Staphylococcal accessory regulator A</fullName>
    </alternativeName>
</protein>
<evidence type="ECO:0000250" key="1"/>
<evidence type="ECO:0000305" key="2"/>
<comment type="function">
    <text evidence="1">Global regulator with both positive and negative effects that controls the expression of several virulence factors and the biofilm formation process in a cell density-dependent manner.</text>
</comment>
<comment type="subunit">
    <text evidence="1">Homodimer.</text>
</comment>
<comment type="subcellular location">
    <subcellularLocation>
        <location evidence="1">Cytoplasm</location>
    </subcellularLocation>
</comment>
<comment type="similarity">
    <text evidence="2">Belongs to the SarA family.</text>
</comment>
<keyword id="KW-0010">Activator</keyword>
<keyword id="KW-0963">Cytoplasm</keyword>
<keyword id="KW-0238">DNA-binding</keyword>
<keyword id="KW-0479">Metal-binding</keyword>
<keyword id="KW-0678">Repressor</keyword>
<keyword id="KW-0804">Transcription</keyword>
<keyword id="KW-0805">Transcription regulation</keyword>
<keyword id="KW-0843">Virulence</keyword>
<proteinExistence type="inferred from homology"/>
<organism>
    <name type="scientific">Staphylococcus aureus (strain USA300)</name>
    <dbReference type="NCBI Taxonomy" id="367830"/>
    <lineage>
        <taxon>Bacteria</taxon>
        <taxon>Bacillati</taxon>
        <taxon>Bacillota</taxon>
        <taxon>Bacilli</taxon>
        <taxon>Bacillales</taxon>
        <taxon>Staphylococcaceae</taxon>
        <taxon>Staphylococcus</taxon>
    </lineage>
</organism>
<reference key="1">
    <citation type="journal article" date="2006" name="Lancet">
        <title>Complete genome sequence of USA300, an epidemic clone of community-acquired meticillin-resistant Staphylococcus aureus.</title>
        <authorList>
            <person name="Diep B.A."/>
            <person name="Gill S.R."/>
            <person name="Chang R.F."/>
            <person name="Phan T.H."/>
            <person name="Chen J.H."/>
            <person name="Davidson M.G."/>
            <person name="Lin F."/>
            <person name="Lin J."/>
            <person name="Carleton H.A."/>
            <person name="Mongodin E.F."/>
            <person name="Sensabaugh G.F."/>
            <person name="Perdreau-Remington F."/>
        </authorList>
    </citation>
    <scope>NUCLEOTIDE SEQUENCE [LARGE SCALE GENOMIC DNA]</scope>
    <source>
        <strain>USA300</strain>
    </source>
</reference>
<feature type="initiator methionine" description="Removed" evidence="1">
    <location>
        <position position="1"/>
    </location>
</feature>
<feature type="chain" id="PRO_0000295624" description="Transcriptional regulator SarA">
    <location>
        <begin position="2"/>
        <end position="124"/>
    </location>
</feature>
<feature type="binding site" evidence="1">
    <location>
        <position position="7"/>
    </location>
    <ligand>
        <name>a divalent metal cation</name>
        <dbReference type="ChEBI" id="CHEBI:60240"/>
    </ligand>
</feature>
<feature type="binding site" evidence="1">
    <location>
        <position position="8"/>
    </location>
    <ligand>
        <name>a divalent metal cation</name>
        <dbReference type="ChEBI" id="CHEBI:60240"/>
    </ligand>
</feature>
<feature type="binding site" evidence="1">
    <location>
        <position position="11"/>
    </location>
    <ligand>
        <name>a divalent metal cation</name>
        <dbReference type="ChEBI" id="CHEBI:60240"/>
    </ligand>
</feature>
<sequence>MAITKINDCFELLSMVTYADKLKSLIKKEFSISFEEFAVLTYISENKEKEYYLKDIINHLNYKQPQVVKAVKILSQEDYFDKKRNEHDERTVLILVNAQQRKKIESLLSRVNKRITEANNEIEL</sequence>
<name>SARA_STAA3</name>
<accession>Q2FJ20</accession>